<organism>
    <name type="scientific">Bos taurus</name>
    <name type="common">Bovine</name>
    <dbReference type="NCBI Taxonomy" id="9913"/>
    <lineage>
        <taxon>Eukaryota</taxon>
        <taxon>Metazoa</taxon>
        <taxon>Chordata</taxon>
        <taxon>Craniata</taxon>
        <taxon>Vertebrata</taxon>
        <taxon>Euteleostomi</taxon>
        <taxon>Mammalia</taxon>
        <taxon>Eutheria</taxon>
        <taxon>Laurasiatheria</taxon>
        <taxon>Artiodactyla</taxon>
        <taxon>Ruminantia</taxon>
        <taxon>Pecora</taxon>
        <taxon>Bovidae</taxon>
        <taxon>Bovinae</taxon>
        <taxon>Bos</taxon>
    </lineage>
</organism>
<proteinExistence type="evidence at transcript level"/>
<reference key="1">
    <citation type="journal article" date="2009" name="Genome Biol.">
        <title>A whole-genome assembly of the domestic cow, Bos taurus.</title>
        <authorList>
            <person name="Zimin A.V."/>
            <person name="Delcher A.L."/>
            <person name="Florea L."/>
            <person name="Kelley D.R."/>
            <person name="Schatz M.C."/>
            <person name="Puiu D."/>
            <person name="Hanrahan F."/>
            <person name="Pertea G."/>
            <person name="Van Tassell C.P."/>
            <person name="Sonstegard T.S."/>
            <person name="Marcais G."/>
            <person name="Roberts M."/>
            <person name="Subramanian P."/>
            <person name="Yorke J.A."/>
            <person name="Salzberg S.L."/>
        </authorList>
    </citation>
    <scope>NUCLEOTIDE SEQUENCE [LARGE SCALE GENOMIC DNA]</scope>
    <source>
        <strain>Hereford</strain>
    </source>
</reference>
<reference key="2">
    <citation type="submission" date="2007-06" db="EMBL/GenBank/DDBJ databases">
        <authorList>
            <consortium name="NIH - Mammalian Gene Collection (MGC) project"/>
        </authorList>
    </citation>
    <scope>NUCLEOTIDE SEQUENCE [LARGE SCALE MRNA]</scope>
    <source>
        <strain>Hereford</strain>
        <tissue>Brain cortex</tissue>
    </source>
</reference>
<feature type="signal peptide" evidence="4">
    <location>
        <begin position="1"/>
        <end position="22"/>
    </location>
</feature>
<feature type="chain" id="PRO_0000417022" description="Secretogranin-3">
    <location>
        <begin position="23"/>
        <end position="471"/>
    </location>
</feature>
<feature type="region of interest" description="Disordered" evidence="5">
    <location>
        <begin position="23"/>
        <end position="72"/>
    </location>
</feature>
<feature type="region of interest" description="Disordered" evidence="5">
    <location>
        <begin position="86"/>
        <end position="105"/>
    </location>
</feature>
<feature type="region of interest" description="Disordered" evidence="5">
    <location>
        <begin position="357"/>
        <end position="409"/>
    </location>
</feature>
<feature type="compositionally biased region" description="Basic and acidic residues" evidence="5">
    <location>
        <begin position="32"/>
        <end position="45"/>
    </location>
</feature>
<feature type="compositionally biased region" description="Basic and acidic residues" evidence="5">
    <location>
        <begin position="86"/>
        <end position="96"/>
    </location>
</feature>
<feature type="compositionally biased region" description="Basic and acidic residues" evidence="5">
    <location>
        <begin position="363"/>
        <end position="409"/>
    </location>
</feature>
<feature type="modified residue" description="Phosphoserine" evidence="1">
    <location>
        <position position="40"/>
    </location>
</feature>
<feature type="modified residue" description="Phosphoserine" evidence="1">
    <location>
        <position position="365"/>
    </location>
</feature>
<feature type="glycosylation site" description="O-linked (Xyl...) (chondroitin sulfate) serine" evidence="3">
    <location>
        <position position="40"/>
    </location>
</feature>
<feature type="glycosylation site" description="N-linked (GlcNAc...) asparagine" evidence="4">
    <location>
        <position position="71"/>
    </location>
</feature>
<feature type="glycosylation site" description="N-linked (GlcNAc...) asparagine" evidence="4">
    <location>
        <position position="353"/>
    </location>
</feature>
<name>SCG3_BOVIN</name>
<sequence length="471" mass="53751">MGFLWTGTWIVVLMLHSSPIQAFPKPAGSQDKPLHNRELSAERPLNEQIAEAEADEIKKTYPPENKPGESNYSFVDNLNLLKAITEKEKNEKERQSVKISPNDNKLNVEDVDSTKNRRLIDDYDSTKSGLDRKFQDDPDGLHQLDGTPLTAEDIVQKIATRIYEENDRGVFDRIVSKLLNLGLITESQAHTLEDEVAEVLQKLISKEANNYEEELNKPTSKTESQTGKIPEKVTPMAAIQDAFTNGENDETVSNTLTLTNGLERRTKTYSEDNFEELQYFPNFYALLKSIDSEKEAKEKETLITIMKTLIDFVKMMVKYGTISPEEGVSYLENLDETIALQTKNKLEKNVTDNKSKLFAVPSEKSHEETDSTKEEAAKMEKEYGTLKDSTKDDDSNPRGKTDEHKGKTEAYLEAIRKNIDWLKKHNKKENKEDYDLSKMRDFINQQADAYVEKGILDKEEADAIKRIYSSL</sequence>
<comment type="function">
    <text evidence="2 3">Member of the granin protein family that regulates the biogenesis of secretory granules (By similarity). Acts as a sorting receptor for intragranular proteins including chromogranin A/CHGA (By similarity). May also play a role in angiogenesis. Promotes endothelial proliferation, migration and tube formation through MEK/ERK signaling pathway (By similarity).</text>
</comment>
<comment type="subunit">
    <text evidence="1 3">Interacts with CHGA (By similarity). Interacts with secretogranin II/SCG2 (By similarity). Interacts (via C-terminus) with CPE (By similarity).</text>
</comment>
<comment type="subcellular location">
    <subcellularLocation>
        <location evidence="2">Cytoplasmic vesicle</location>
        <location evidence="2">Secretory vesicle</location>
    </subcellularLocation>
    <subcellularLocation>
        <location evidence="2">Cytoplasmic vesicle</location>
        <location evidence="2">Secretory vesicle membrane</location>
        <topology>Peripheral membrane protein</topology>
    </subcellularLocation>
    <subcellularLocation>
        <location evidence="3">Secreted</location>
    </subcellularLocation>
    <text evidence="2">Associated with the secretory granule membrane through direct binding to cholesterol-enriched lipid rafts.</text>
</comment>
<gene>
    <name type="primary">SCG3</name>
</gene>
<accession>A6QLI2</accession>
<accession>F1MY56</accession>
<dbReference type="EMBL" id="DAAA02029009">
    <property type="status" value="NOT_ANNOTATED_CDS"/>
    <property type="molecule type" value="Genomic_DNA"/>
</dbReference>
<dbReference type="EMBL" id="DAAA02029010">
    <property type="status" value="NOT_ANNOTATED_CDS"/>
    <property type="molecule type" value="Genomic_DNA"/>
</dbReference>
<dbReference type="EMBL" id="DAAA02029011">
    <property type="status" value="NOT_ANNOTATED_CDS"/>
    <property type="molecule type" value="Genomic_DNA"/>
</dbReference>
<dbReference type="EMBL" id="BC147974">
    <property type="protein sequence ID" value="AAI47975.1"/>
    <property type="molecule type" value="mRNA"/>
</dbReference>
<dbReference type="RefSeq" id="NP_001095567.1">
    <property type="nucleotide sequence ID" value="NM_001102097.1"/>
</dbReference>
<dbReference type="FunCoup" id="A6QLI2">
    <property type="interactions" value="631"/>
</dbReference>
<dbReference type="STRING" id="9913.ENSBTAP00000068705"/>
<dbReference type="GlyCosmos" id="A6QLI2">
    <property type="glycosylation" value="2 sites, No reported glycans"/>
</dbReference>
<dbReference type="GlyGen" id="A6QLI2">
    <property type="glycosylation" value="3 sites"/>
</dbReference>
<dbReference type="PaxDb" id="9913-ENSBTAP00000023512"/>
<dbReference type="Ensembl" id="ENSBTAT00000023512.5">
    <property type="protein sequence ID" value="ENSBTAP00000023512.4"/>
    <property type="gene ID" value="ENSBTAG00000017677.6"/>
</dbReference>
<dbReference type="GeneID" id="525941"/>
<dbReference type="KEGG" id="bta:525941"/>
<dbReference type="CTD" id="29106"/>
<dbReference type="VEuPathDB" id="HostDB:ENSBTAG00000017677"/>
<dbReference type="VGNC" id="VGNC:34333">
    <property type="gene designation" value="SCG3"/>
</dbReference>
<dbReference type="eggNOG" id="ENOG502QUJH">
    <property type="taxonomic scope" value="Eukaryota"/>
</dbReference>
<dbReference type="GeneTree" id="ENSGT00390000005488"/>
<dbReference type="HOGENOM" id="CLU_031198_1_0_1"/>
<dbReference type="InParanoid" id="A6QLI2"/>
<dbReference type="OMA" id="TDKAIHN"/>
<dbReference type="OrthoDB" id="9941750at2759"/>
<dbReference type="TreeFam" id="TF331266"/>
<dbReference type="Reactome" id="R-BTA-114608">
    <property type="pathway name" value="Platelet degranulation"/>
</dbReference>
<dbReference type="Reactome" id="R-BTA-381426">
    <property type="pathway name" value="Regulation of Insulin-like Growth Factor (IGF) transport and uptake by Insulin-like Growth Factor Binding Proteins (IGFBPs)"/>
</dbReference>
<dbReference type="Reactome" id="R-BTA-8957275">
    <property type="pathway name" value="Post-translational protein phosphorylation"/>
</dbReference>
<dbReference type="Proteomes" id="UP000009136">
    <property type="component" value="Chromosome 10"/>
</dbReference>
<dbReference type="Bgee" id="ENSBTAG00000017677">
    <property type="expression patterns" value="Expressed in adenohypophysis and 81 other cell types or tissues"/>
</dbReference>
<dbReference type="GO" id="GO:0005576">
    <property type="term" value="C:extracellular region"/>
    <property type="evidence" value="ECO:0007669"/>
    <property type="project" value="UniProtKB-SubCell"/>
</dbReference>
<dbReference type="GO" id="GO:0030667">
    <property type="term" value="C:secretory granule membrane"/>
    <property type="evidence" value="ECO:0000318"/>
    <property type="project" value="GO_Central"/>
</dbReference>
<dbReference type="GO" id="GO:0030658">
    <property type="term" value="C:transport vesicle membrane"/>
    <property type="evidence" value="ECO:0007669"/>
    <property type="project" value="UniProtKB-SubCell"/>
</dbReference>
<dbReference type="GO" id="GO:0033366">
    <property type="term" value="P:protein localization to secretory granule"/>
    <property type="evidence" value="ECO:0000318"/>
    <property type="project" value="GO_Central"/>
</dbReference>
<dbReference type="InterPro" id="IPR026197">
    <property type="entry name" value="SCG3"/>
</dbReference>
<dbReference type="PANTHER" id="PTHR17388">
    <property type="entry name" value="SECRETOGRANIN III"/>
    <property type="match status" value="1"/>
</dbReference>
<dbReference type="PANTHER" id="PTHR17388:SF2">
    <property type="entry name" value="SECRETOGRANIN-3"/>
    <property type="match status" value="1"/>
</dbReference>
<dbReference type="Pfam" id="PF15467">
    <property type="entry name" value="SGIII"/>
    <property type="match status" value="1"/>
</dbReference>
<keyword id="KW-0165">Cleavage on pair of basic residues</keyword>
<keyword id="KW-0968">Cytoplasmic vesicle</keyword>
<keyword id="KW-0325">Glycoprotein</keyword>
<keyword id="KW-0472">Membrane</keyword>
<keyword id="KW-0597">Phosphoprotein</keyword>
<keyword id="KW-0654">Proteoglycan</keyword>
<keyword id="KW-1185">Reference proteome</keyword>
<keyword id="KW-0964">Secreted</keyword>
<keyword id="KW-0732">Signal</keyword>
<protein>
    <recommendedName>
        <fullName>Secretogranin-3</fullName>
    </recommendedName>
    <alternativeName>
        <fullName>Secretogranin III</fullName>
        <shortName>SgIII</shortName>
    </alternativeName>
</protein>
<evidence type="ECO:0000250" key="1">
    <source>
        <dbReference type="UniProtKB" id="P47867"/>
    </source>
</evidence>
<evidence type="ECO:0000250" key="2">
    <source>
        <dbReference type="UniProtKB" id="P47868"/>
    </source>
</evidence>
<evidence type="ECO:0000250" key="3">
    <source>
        <dbReference type="UniProtKB" id="Q8WXD2"/>
    </source>
</evidence>
<evidence type="ECO:0000255" key="4"/>
<evidence type="ECO:0000256" key="5">
    <source>
        <dbReference type="SAM" id="MobiDB-lite"/>
    </source>
</evidence>